<reference key="1">
    <citation type="journal article" date="2003" name="Nature">
        <title>Genome divergence in two Prochlorococcus ecotypes reflects oceanic niche differentiation.</title>
        <authorList>
            <person name="Rocap G."/>
            <person name="Larimer F.W."/>
            <person name="Lamerdin J.E."/>
            <person name="Malfatti S."/>
            <person name="Chain P."/>
            <person name="Ahlgren N.A."/>
            <person name="Arellano A."/>
            <person name="Coleman M."/>
            <person name="Hauser L."/>
            <person name="Hess W.R."/>
            <person name="Johnson Z.I."/>
            <person name="Land M.L."/>
            <person name="Lindell D."/>
            <person name="Post A.F."/>
            <person name="Regala W."/>
            <person name="Shah M."/>
            <person name="Shaw S.L."/>
            <person name="Steglich C."/>
            <person name="Sullivan M.B."/>
            <person name="Ting C.S."/>
            <person name="Tolonen A."/>
            <person name="Webb E.A."/>
            <person name="Zinser E.R."/>
            <person name="Chisholm S.W."/>
        </authorList>
    </citation>
    <scope>NUCLEOTIDE SEQUENCE [LARGE SCALE GENOMIC DNA]</scope>
    <source>
        <strain>MIT 9313</strain>
    </source>
</reference>
<gene>
    <name evidence="2" type="primary">ddl</name>
    <name type="synonym">ddlA</name>
    <name type="ordered locus">PMT_0322</name>
</gene>
<protein>
    <recommendedName>
        <fullName evidence="2">D-alanine--D-alanine ligase</fullName>
        <ecNumber evidence="2">6.3.2.4</ecNumber>
    </recommendedName>
    <alternativeName>
        <fullName evidence="2">D-Ala-D-Ala ligase</fullName>
    </alternativeName>
    <alternativeName>
        <fullName evidence="2">D-alanylalanine synthetase</fullName>
    </alternativeName>
</protein>
<keyword id="KW-0067">ATP-binding</keyword>
<keyword id="KW-0133">Cell shape</keyword>
<keyword id="KW-0961">Cell wall biogenesis/degradation</keyword>
<keyword id="KW-0963">Cytoplasm</keyword>
<keyword id="KW-0436">Ligase</keyword>
<keyword id="KW-0460">Magnesium</keyword>
<keyword id="KW-0464">Manganese</keyword>
<keyword id="KW-0479">Metal-binding</keyword>
<keyword id="KW-0547">Nucleotide-binding</keyword>
<keyword id="KW-0573">Peptidoglycan synthesis</keyword>
<keyword id="KW-1185">Reference proteome</keyword>
<organism>
    <name type="scientific">Prochlorococcus marinus (strain MIT 9313)</name>
    <dbReference type="NCBI Taxonomy" id="74547"/>
    <lineage>
        <taxon>Bacteria</taxon>
        <taxon>Bacillati</taxon>
        <taxon>Cyanobacteriota</taxon>
        <taxon>Cyanophyceae</taxon>
        <taxon>Synechococcales</taxon>
        <taxon>Prochlorococcaceae</taxon>
        <taxon>Prochlorococcus</taxon>
    </lineage>
</organism>
<comment type="function">
    <text evidence="2">Cell wall formation.</text>
</comment>
<comment type="catalytic activity">
    <reaction evidence="2">
        <text>2 D-alanine + ATP = D-alanyl-D-alanine + ADP + phosphate + H(+)</text>
        <dbReference type="Rhea" id="RHEA:11224"/>
        <dbReference type="ChEBI" id="CHEBI:15378"/>
        <dbReference type="ChEBI" id="CHEBI:30616"/>
        <dbReference type="ChEBI" id="CHEBI:43474"/>
        <dbReference type="ChEBI" id="CHEBI:57416"/>
        <dbReference type="ChEBI" id="CHEBI:57822"/>
        <dbReference type="ChEBI" id="CHEBI:456216"/>
        <dbReference type="EC" id="6.3.2.4"/>
    </reaction>
</comment>
<comment type="cofactor">
    <cofactor evidence="1">
        <name>Mg(2+)</name>
        <dbReference type="ChEBI" id="CHEBI:18420"/>
    </cofactor>
    <cofactor evidence="1">
        <name>Mn(2+)</name>
        <dbReference type="ChEBI" id="CHEBI:29035"/>
    </cofactor>
    <text evidence="1">Binds 2 magnesium or manganese ions per subunit.</text>
</comment>
<comment type="pathway">
    <text evidence="2">Cell wall biogenesis; peptidoglycan biosynthesis.</text>
</comment>
<comment type="subcellular location">
    <subcellularLocation>
        <location evidence="2">Cytoplasm</location>
    </subcellularLocation>
</comment>
<comment type="similarity">
    <text evidence="2">Belongs to the D-alanine--D-alanine ligase family.</text>
</comment>
<evidence type="ECO:0000250" key="1"/>
<evidence type="ECO:0000255" key="2">
    <source>
        <dbReference type="HAMAP-Rule" id="MF_00047"/>
    </source>
</evidence>
<proteinExistence type="inferred from homology"/>
<name>DDL_PROMM</name>
<feature type="chain" id="PRO_0000177853" description="D-alanine--D-alanine ligase">
    <location>
        <begin position="1"/>
        <end position="353"/>
    </location>
</feature>
<feature type="domain" description="ATP-grasp" evidence="2">
    <location>
        <begin position="141"/>
        <end position="349"/>
    </location>
</feature>
<feature type="binding site" evidence="2">
    <location>
        <begin position="176"/>
        <end position="231"/>
    </location>
    <ligand>
        <name>ATP</name>
        <dbReference type="ChEBI" id="CHEBI:30616"/>
    </ligand>
</feature>
<feature type="binding site" evidence="2">
    <location>
        <position position="302"/>
    </location>
    <ligand>
        <name>Mg(2+)</name>
        <dbReference type="ChEBI" id="CHEBI:18420"/>
        <label>1</label>
    </ligand>
</feature>
<feature type="binding site" evidence="2">
    <location>
        <position position="316"/>
    </location>
    <ligand>
        <name>Mg(2+)</name>
        <dbReference type="ChEBI" id="CHEBI:18420"/>
        <label>1</label>
    </ligand>
</feature>
<feature type="binding site" evidence="2">
    <location>
        <position position="316"/>
    </location>
    <ligand>
        <name>Mg(2+)</name>
        <dbReference type="ChEBI" id="CHEBI:18420"/>
        <label>2</label>
    </ligand>
</feature>
<feature type="binding site" evidence="2">
    <location>
        <position position="318"/>
    </location>
    <ligand>
        <name>Mg(2+)</name>
        <dbReference type="ChEBI" id="CHEBI:18420"/>
        <label>2</label>
    </ligand>
</feature>
<sequence length="353" mass="38174">MPSSRTCVGVVFGGASEEHAVSIRSAITVVGALRSEVNNNRFEVIAIYIDQRGRWWPAGVAEAVLKQGHPAKPEQLSTPLAPQGFTKLPEGSERVQVWYPVLHGPNGEDGTVQGLFTLMGQPFVGSGVLGSALSMDKLAMKAAFAAAGLPQVPYAAVDAADLLETESRQGVAKHLEAKLKYPCFVKPANLGSSVGISKAQNRNELLIGLDKAASLDRRIVVEQGVSARELECAVLGKRELQTSVVGEICFDADWYDYDTKYSENCSHTLIPAPLPEGVEAQIRTLALQACRCVAAHGMARVDFFYNAARNEIWLNEINTLPGFTSQSMYPMLWEASGVTLEELVSQLVITARE</sequence>
<accession>Q7V8L9</accession>
<dbReference type="EC" id="6.3.2.4" evidence="2"/>
<dbReference type="EMBL" id="BX548175">
    <property type="protein sequence ID" value="CAE20497.1"/>
    <property type="molecule type" value="Genomic_DNA"/>
</dbReference>
<dbReference type="RefSeq" id="WP_011129701.1">
    <property type="nucleotide sequence ID" value="NC_005071.1"/>
</dbReference>
<dbReference type="SMR" id="Q7V8L9"/>
<dbReference type="KEGG" id="pmt:PMT_0322"/>
<dbReference type="eggNOG" id="COG1181">
    <property type="taxonomic scope" value="Bacteria"/>
</dbReference>
<dbReference type="HOGENOM" id="CLU_039268_0_0_3"/>
<dbReference type="OrthoDB" id="9813261at2"/>
<dbReference type="UniPathway" id="UPA00219"/>
<dbReference type="Proteomes" id="UP000001423">
    <property type="component" value="Chromosome"/>
</dbReference>
<dbReference type="GO" id="GO:0005829">
    <property type="term" value="C:cytosol"/>
    <property type="evidence" value="ECO:0007669"/>
    <property type="project" value="TreeGrafter"/>
</dbReference>
<dbReference type="GO" id="GO:0005524">
    <property type="term" value="F:ATP binding"/>
    <property type="evidence" value="ECO:0007669"/>
    <property type="project" value="UniProtKB-KW"/>
</dbReference>
<dbReference type="GO" id="GO:0008716">
    <property type="term" value="F:D-alanine-D-alanine ligase activity"/>
    <property type="evidence" value="ECO:0007669"/>
    <property type="project" value="UniProtKB-UniRule"/>
</dbReference>
<dbReference type="GO" id="GO:0046872">
    <property type="term" value="F:metal ion binding"/>
    <property type="evidence" value="ECO:0007669"/>
    <property type="project" value="UniProtKB-KW"/>
</dbReference>
<dbReference type="GO" id="GO:0071555">
    <property type="term" value="P:cell wall organization"/>
    <property type="evidence" value="ECO:0007669"/>
    <property type="project" value="UniProtKB-KW"/>
</dbReference>
<dbReference type="GO" id="GO:0009252">
    <property type="term" value="P:peptidoglycan biosynthetic process"/>
    <property type="evidence" value="ECO:0007669"/>
    <property type="project" value="UniProtKB-UniRule"/>
</dbReference>
<dbReference type="GO" id="GO:0008360">
    <property type="term" value="P:regulation of cell shape"/>
    <property type="evidence" value="ECO:0007669"/>
    <property type="project" value="UniProtKB-KW"/>
</dbReference>
<dbReference type="FunFam" id="3.30.1490.20:FF:000007">
    <property type="entry name" value="D-alanine--D-alanine ligase"/>
    <property type="match status" value="1"/>
</dbReference>
<dbReference type="FunFam" id="3.30.470.20:FF:000008">
    <property type="entry name" value="D-alanine--D-alanine ligase"/>
    <property type="match status" value="1"/>
</dbReference>
<dbReference type="Gene3D" id="3.40.50.20">
    <property type="match status" value="1"/>
</dbReference>
<dbReference type="Gene3D" id="3.30.1490.20">
    <property type="entry name" value="ATP-grasp fold, A domain"/>
    <property type="match status" value="1"/>
</dbReference>
<dbReference type="Gene3D" id="3.30.470.20">
    <property type="entry name" value="ATP-grasp fold, B domain"/>
    <property type="match status" value="1"/>
</dbReference>
<dbReference type="HAMAP" id="MF_00047">
    <property type="entry name" value="Dala_Dala_lig"/>
    <property type="match status" value="1"/>
</dbReference>
<dbReference type="InterPro" id="IPR011761">
    <property type="entry name" value="ATP-grasp"/>
</dbReference>
<dbReference type="InterPro" id="IPR013815">
    <property type="entry name" value="ATP_grasp_subdomain_1"/>
</dbReference>
<dbReference type="InterPro" id="IPR000291">
    <property type="entry name" value="D-Ala_lig_Van_CS"/>
</dbReference>
<dbReference type="InterPro" id="IPR005905">
    <property type="entry name" value="D_ala_D_ala"/>
</dbReference>
<dbReference type="InterPro" id="IPR011095">
    <property type="entry name" value="Dala_Dala_lig_C"/>
</dbReference>
<dbReference type="InterPro" id="IPR011127">
    <property type="entry name" value="Dala_Dala_lig_N"/>
</dbReference>
<dbReference type="InterPro" id="IPR016185">
    <property type="entry name" value="PreATP-grasp_dom_sf"/>
</dbReference>
<dbReference type="NCBIfam" id="TIGR01205">
    <property type="entry name" value="D_ala_D_alaTIGR"/>
    <property type="match status" value="1"/>
</dbReference>
<dbReference type="NCBIfam" id="NF002528">
    <property type="entry name" value="PRK01966.1-4"/>
    <property type="match status" value="1"/>
</dbReference>
<dbReference type="PANTHER" id="PTHR23132">
    <property type="entry name" value="D-ALANINE--D-ALANINE LIGASE"/>
    <property type="match status" value="1"/>
</dbReference>
<dbReference type="PANTHER" id="PTHR23132:SF25">
    <property type="entry name" value="D-ALANINE--D-ALANINE LIGASE A"/>
    <property type="match status" value="1"/>
</dbReference>
<dbReference type="Pfam" id="PF07478">
    <property type="entry name" value="Dala_Dala_lig_C"/>
    <property type="match status" value="1"/>
</dbReference>
<dbReference type="Pfam" id="PF01820">
    <property type="entry name" value="Dala_Dala_lig_N"/>
    <property type="match status" value="1"/>
</dbReference>
<dbReference type="PIRSF" id="PIRSF039102">
    <property type="entry name" value="Ddl/VanB"/>
    <property type="match status" value="1"/>
</dbReference>
<dbReference type="SUPFAM" id="SSF56059">
    <property type="entry name" value="Glutathione synthetase ATP-binding domain-like"/>
    <property type="match status" value="1"/>
</dbReference>
<dbReference type="SUPFAM" id="SSF52440">
    <property type="entry name" value="PreATP-grasp domain"/>
    <property type="match status" value="1"/>
</dbReference>
<dbReference type="PROSITE" id="PS50975">
    <property type="entry name" value="ATP_GRASP"/>
    <property type="match status" value="1"/>
</dbReference>
<dbReference type="PROSITE" id="PS00843">
    <property type="entry name" value="DALA_DALA_LIGASE_1"/>
    <property type="match status" value="1"/>
</dbReference>
<dbReference type="PROSITE" id="PS00844">
    <property type="entry name" value="DALA_DALA_LIGASE_2"/>
    <property type="match status" value="1"/>
</dbReference>